<reference key="1">
    <citation type="journal article" date="1992" name="Proc. Natl. Acad. Sci. U.S.A.">
        <title>Evolutionary conservation pattern of zinc-finger domains of Drosophila segmentation genes.</title>
        <authorList>
            <person name="Sommer R.J."/>
            <person name="Retzlaff M."/>
            <person name="Goerlich K."/>
            <person name="Sander K."/>
            <person name="Tautz D."/>
        </authorList>
    </citation>
    <scope>NUCLEOTIDE SEQUENCE [GENOMIC DNA]</scope>
</reference>
<organism>
    <name type="scientific">Pholcus phalangioides</name>
    <name type="common">Longbodied cellar spider</name>
    <name type="synonym">Aranea phalangioides</name>
    <dbReference type="NCBI Taxonomy" id="6932"/>
    <lineage>
        <taxon>Eukaryota</taxon>
        <taxon>Metazoa</taxon>
        <taxon>Ecdysozoa</taxon>
        <taxon>Arthropoda</taxon>
        <taxon>Chelicerata</taxon>
        <taxon>Arachnida</taxon>
        <taxon>Araneae</taxon>
        <taxon>Araneomorphae</taxon>
        <taxon>Haplogynae</taxon>
        <taxon>Pholcoidea</taxon>
        <taxon>Pholcidae</taxon>
        <taxon>Pholcus</taxon>
    </lineage>
</organism>
<evidence type="ECO:0000255" key="1">
    <source>
        <dbReference type="PROSITE-ProRule" id="PRU00042"/>
    </source>
</evidence>
<evidence type="ECO:0000305" key="2"/>
<keyword id="KW-0217">Developmental protein</keyword>
<keyword id="KW-0238">DNA-binding</keyword>
<keyword id="KW-0302">Gap protein</keyword>
<keyword id="KW-0479">Metal-binding</keyword>
<keyword id="KW-0539">Nucleus</keyword>
<keyword id="KW-0677">Repeat</keyword>
<keyword id="KW-0862">Zinc</keyword>
<keyword id="KW-0863">Zinc-finger</keyword>
<name>HUNB_PHOPA</name>
<comment type="function">
    <text>Gap class segmentation protein that controls development of head structures.</text>
</comment>
<comment type="subcellular location">
    <subcellularLocation>
        <location evidence="2">Nucleus</location>
    </subcellularLocation>
</comment>
<comment type="similarity">
    <text evidence="2">Belongs to the hunchback C2H2-type zinc-finger protein family.</text>
</comment>
<dbReference type="EMBL" id="L01604">
    <property type="protein sequence ID" value="AAA89210.1"/>
    <property type="molecule type" value="Genomic_DNA"/>
</dbReference>
<dbReference type="SMR" id="Q02031"/>
<dbReference type="GO" id="GO:0005634">
    <property type="term" value="C:nucleus"/>
    <property type="evidence" value="ECO:0007669"/>
    <property type="project" value="UniProtKB-SubCell"/>
</dbReference>
<dbReference type="GO" id="GO:0003677">
    <property type="term" value="F:DNA binding"/>
    <property type="evidence" value="ECO:0007669"/>
    <property type="project" value="UniProtKB-KW"/>
</dbReference>
<dbReference type="GO" id="GO:0008270">
    <property type="term" value="F:zinc ion binding"/>
    <property type="evidence" value="ECO:0007669"/>
    <property type="project" value="UniProtKB-KW"/>
</dbReference>
<dbReference type="GO" id="GO:0035282">
    <property type="term" value="P:segmentation"/>
    <property type="evidence" value="ECO:0007669"/>
    <property type="project" value="UniProtKB-KW"/>
</dbReference>
<dbReference type="FunFam" id="3.30.160.60:FF:000614">
    <property type="entry name" value="Zinc finger protein 142"/>
    <property type="match status" value="1"/>
</dbReference>
<dbReference type="Gene3D" id="3.30.160.60">
    <property type="entry name" value="Classic Zinc Finger"/>
    <property type="match status" value="1"/>
</dbReference>
<dbReference type="InterPro" id="IPR036236">
    <property type="entry name" value="Znf_C2H2_sf"/>
</dbReference>
<dbReference type="InterPro" id="IPR013087">
    <property type="entry name" value="Znf_C2H2_type"/>
</dbReference>
<dbReference type="SMART" id="SM00355">
    <property type="entry name" value="ZnF_C2H2"/>
    <property type="match status" value="1"/>
</dbReference>
<dbReference type="SUPFAM" id="SSF57667">
    <property type="entry name" value="beta-beta-alpha zinc fingers"/>
    <property type="match status" value="1"/>
</dbReference>
<dbReference type="PROSITE" id="PS00028">
    <property type="entry name" value="ZINC_FINGER_C2H2_1"/>
    <property type="match status" value="1"/>
</dbReference>
<dbReference type="PROSITE" id="PS50157">
    <property type="entry name" value="ZINC_FINGER_C2H2_2"/>
    <property type="match status" value="1"/>
</dbReference>
<proteinExistence type="inferred from homology"/>
<protein>
    <recommendedName>
        <fullName>Protein hunchback</fullName>
    </recommendedName>
</protein>
<gene>
    <name type="primary">hb</name>
</gene>
<accession>Q02031</accession>
<feature type="chain" id="PRO_0000046978" description="Protein hunchback">
    <location>
        <begin position="1" status="less than"/>
        <end position="50" status="greater than"/>
    </location>
</feature>
<feature type="zinc finger region" description="C2H2-type 1" evidence="1">
    <location>
        <begin position="1" status="less than"/>
        <end position="5"/>
    </location>
</feature>
<feature type="zinc finger region" description="C2H2-type 2" evidence="1">
    <location>
        <begin position="11"/>
        <end position="33"/>
    </location>
</feature>
<feature type="zinc finger region" description="C2H2-type 3" evidence="1">
    <location>
        <begin position="39"/>
        <end position="50" status="greater than"/>
    </location>
</feature>
<feature type="non-terminal residue">
    <location>
        <position position="1"/>
    </location>
</feature>
<feature type="non-terminal residue">
    <location>
        <position position="50"/>
    </location>
</feature>
<sequence>HLRNHFGSKPFKCGKCNYSCANKSMLNSHMKSHSNIYQYRCANCCYATKY</sequence>